<feature type="chain" id="PRO_0000448855" description="Sterol 14-alpha demethylase cyp51A">
    <location>
        <begin position="1"/>
        <end position="515"/>
    </location>
</feature>
<feature type="transmembrane region" description="Helical" evidence="3">
    <location>
        <begin position="7"/>
        <end position="29"/>
    </location>
</feature>
<feature type="binding site" description="axial binding residue" evidence="2">
    <location>
        <position position="454"/>
    </location>
    <ligand>
        <name>heme</name>
        <dbReference type="ChEBI" id="CHEBI:30413"/>
    </ligand>
    <ligandPart>
        <name>Fe</name>
        <dbReference type="ChEBI" id="CHEBI:18248"/>
    </ligandPart>
</feature>
<feature type="glycosylation site" description="N-linked (GlcNAc...) asparagine" evidence="4">
    <location>
        <position position="33"/>
    </location>
</feature>
<feature type="glycosylation site" description="N-linked (GlcNAc...) asparagine" evidence="4">
    <location>
        <position position="269"/>
    </location>
</feature>
<feature type="glycosylation site" description="N-linked (GlcNAc...) asparagine" evidence="4">
    <location>
        <position position="512"/>
    </location>
</feature>
<feature type="mutagenesis site" description="Leads to resistance to azole compounds." evidence="5 6 7 10 11 12">
    <original>G</original>
    <variation>E</variation>
    <variation>K</variation>
    <variation>R</variation>
    <variation>V</variation>
    <variation>W</variation>
    <location>
        <position position="54"/>
    </location>
</feature>
<feature type="mutagenesis site" description="Leads to resistance to azole compounds; when associated with a 34 bp tandem duplication in the promoter." evidence="16 19">
    <original>L</original>
    <variation>H</variation>
    <location>
        <position position="98"/>
    </location>
</feature>
<feature type="mutagenesis site" description="Leads to resistance to azole compounds." evidence="9 10">
    <original>M</original>
    <variation>I</variation>
    <variation>K</variation>
    <variation>T</variation>
    <variation>V</variation>
    <location>
        <position position="220"/>
    </location>
</feature>
<name>CP51A_ASPFU</name>
<gene>
    <name evidence="25" type="primary">cyp51A</name>
    <name evidence="26" type="synonym">erg11A</name>
    <name type="ORF">AFUA_4G06890</name>
</gene>
<reference key="1">
    <citation type="journal article" date="2005" name="Nature">
        <title>Genomic sequence of the pathogenic and allergenic filamentous fungus Aspergillus fumigatus.</title>
        <authorList>
            <person name="Nierman W.C."/>
            <person name="Pain A."/>
            <person name="Anderson M.J."/>
            <person name="Wortman J.R."/>
            <person name="Kim H.S."/>
            <person name="Arroyo J."/>
            <person name="Berriman M."/>
            <person name="Abe K."/>
            <person name="Archer D.B."/>
            <person name="Bermejo C."/>
            <person name="Bennett J.W."/>
            <person name="Bowyer P."/>
            <person name="Chen D."/>
            <person name="Collins M."/>
            <person name="Coulsen R."/>
            <person name="Davies R."/>
            <person name="Dyer P.S."/>
            <person name="Farman M.L."/>
            <person name="Fedorova N."/>
            <person name="Fedorova N.D."/>
            <person name="Feldblyum T.V."/>
            <person name="Fischer R."/>
            <person name="Fosker N."/>
            <person name="Fraser A."/>
            <person name="Garcia J.L."/>
            <person name="Garcia M.J."/>
            <person name="Goble A."/>
            <person name="Goldman G.H."/>
            <person name="Gomi K."/>
            <person name="Griffith-Jones S."/>
            <person name="Gwilliam R."/>
            <person name="Haas B.J."/>
            <person name="Haas H."/>
            <person name="Harris D.E."/>
            <person name="Horiuchi H."/>
            <person name="Huang J."/>
            <person name="Humphray S."/>
            <person name="Jimenez J."/>
            <person name="Keller N."/>
            <person name="Khouri H."/>
            <person name="Kitamoto K."/>
            <person name="Kobayashi T."/>
            <person name="Konzack S."/>
            <person name="Kulkarni R."/>
            <person name="Kumagai T."/>
            <person name="Lafton A."/>
            <person name="Latge J.-P."/>
            <person name="Li W."/>
            <person name="Lord A."/>
            <person name="Lu C."/>
            <person name="Majoros W.H."/>
            <person name="May G.S."/>
            <person name="Miller B.L."/>
            <person name="Mohamoud Y."/>
            <person name="Molina M."/>
            <person name="Monod M."/>
            <person name="Mouyna I."/>
            <person name="Mulligan S."/>
            <person name="Murphy L.D."/>
            <person name="O'Neil S."/>
            <person name="Paulsen I."/>
            <person name="Penalva M.A."/>
            <person name="Pertea M."/>
            <person name="Price C."/>
            <person name="Pritchard B.L."/>
            <person name="Quail M.A."/>
            <person name="Rabbinowitsch E."/>
            <person name="Rawlins N."/>
            <person name="Rajandream M.A."/>
            <person name="Reichard U."/>
            <person name="Renauld H."/>
            <person name="Robson G.D."/>
            <person name="Rodriguez de Cordoba S."/>
            <person name="Rodriguez-Pena J.M."/>
            <person name="Ronning C.M."/>
            <person name="Rutter S."/>
            <person name="Salzberg S.L."/>
            <person name="Sanchez M."/>
            <person name="Sanchez-Ferrero J.C."/>
            <person name="Saunders D."/>
            <person name="Seeger K."/>
            <person name="Squares R."/>
            <person name="Squares S."/>
            <person name="Takeuchi M."/>
            <person name="Tekaia F."/>
            <person name="Turner G."/>
            <person name="Vazquez de Aldana C.R."/>
            <person name="Weidman J."/>
            <person name="White O."/>
            <person name="Woodward J.R."/>
            <person name="Yu J.-H."/>
            <person name="Fraser C.M."/>
            <person name="Galagan J.E."/>
            <person name="Asai K."/>
            <person name="Machida M."/>
            <person name="Hall N."/>
            <person name="Barrell B.G."/>
            <person name="Denning D.W."/>
        </authorList>
    </citation>
    <scope>NUCLEOTIDE SEQUENCE [LARGE SCALE GENOMIC DNA]</scope>
    <source>
        <strain>ATCC MYA-4609 / CBS 101355 / FGSC A1100 / Af293</strain>
    </source>
</reference>
<reference key="2">
    <citation type="journal article" date="1997" name="J. Antimicrob. Chemother.">
        <title>Stereoselective interaction of SCH 39304, a triazole, with sterol 14alpha-demethylase of Aspergillus fumigatus.</title>
        <authorList>
            <person name="Venkateswarlu K."/>
            <person name="Kelly S.L."/>
        </authorList>
    </citation>
    <scope>FUNCTION</scope>
    <scope>CATALYTIC ACTIVITY</scope>
    <scope>PATHWAY</scope>
    <scope>ACTIVITY REGULATION</scope>
</reference>
<reference key="3">
    <citation type="journal article" date="2001" name="J. Clin. Microbiol.">
        <title>Identification of two different 14-alpha sterol demethylase-related genes (cyp51A and cyp51B) in Aspergillus fumigatus and other Aspergillus species.</title>
        <authorList>
            <person name="Mellado E."/>
            <person name="Diaz-Guerra T.M."/>
            <person name="Cuenca-Estrella M."/>
            <person name="Rodriguez-Tudela J.L."/>
        </authorList>
    </citation>
    <scope>IDENTIFICATION</scope>
</reference>
<reference key="4">
    <citation type="journal article" date="2003" name="Antimicrob. Agents Chemother.">
        <title>Mutations in Aspergillus fumigatus resulting in reduced susceptibility to posaconazole appear to be restricted to a single amino acid in the cytochrome P450 14alpha-demethylase.</title>
        <authorList>
            <person name="Mann P.A."/>
            <person name="Parmegiani R.M."/>
            <person name="Wei S.Q."/>
            <person name="Mendrick C.A."/>
            <person name="Li X."/>
            <person name="Loebenberg D."/>
            <person name="DiDomenico B."/>
            <person name="Hare R.S."/>
            <person name="Walker S.S."/>
            <person name="McNicholas P.M."/>
        </authorList>
    </citation>
    <scope>FUNCTION</scope>
    <scope>MUTAGENESIS OF GLY-54</scope>
</reference>
<reference key="5">
    <citation type="journal article" date="2003" name="Antimicrob. Agents Chemother.">
        <title>A point mutation in the 14alpha-sterol demethylase gene cyp51A contributes to itraconazole resistance in Aspergillus fumigatus.</title>
        <authorList>
            <person name="Diaz-Guerra T.M."/>
            <person name="Mellado E."/>
            <person name="Cuenca-Estrella M."/>
            <person name="Rodriguez-Tudela J.L."/>
        </authorList>
    </citation>
    <scope>FUNCTION</scope>
    <scope>MUTAGENESIS OF GLY-54</scope>
</reference>
<reference key="6">
    <citation type="journal article" date="2003" name="Antimicrob. Agents Chemother.">
        <title>Multiple resistance mechanisms among Aspergillus fumigatus mutants with high-level resistance to itraconazole.</title>
        <authorList>
            <person name="Nascimento A.M."/>
            <person name="Goldman G.H."/>
            <person name="Park S."/>
            <person name="Marras S.A."/>
            <person name="Delmas G."/>
            <person name="Oza U."/>
            <person name="Lolans K."/>
            <person name="Dudley M.N."/>
            <person name="Mann P.A."/>
            <person name="Perlin D.S."/>
        </authorList>
    </citation>
    <scope>FUNCTION</scope>
    <scope>MUTAGENESIS OF GLY-54</scope>
</reference>
<reference key="7">
    <citation type="journal article" date="2004" name="Antimicrob. Agents Chemother.">
        <title>Substitutions at methionine 220 in the 14alpha-sterol demethylase (Cyp51A) of Aspergillus fumigatus are responsible for resistance in vitro to azole antifungal drugs.</title>
        <authorList>
            <person name="Mellado E."/>
            <person name="Garcia-Effron G."/>
            <person name="Alcazar-Fuoli L."/>
            <person name="Cuenca-Estrella M."/>
            <person name="Rodriguez-Tudela J.L."/>
        </authorList>
    </citation>
    <scope>FUNCTION</scope>
    <scope>MUTAGENESIS OF MET-220</scope>
</reference>
<reference key="8">
    <citation type="journal article" date="2004" name="Bioorg. Med. Chem.">
        <title>Modeling and interactions of Aspergillus fumigatus lanosterol 14-alpha demethylase 'A' with azole antifungals.</title>
        <authorList>
            <person name="Gollapudy R."/>
            <person name="Ajmani S."/>
            <person name="Kulkarni S.A."/>
        </authorList>
    </citation>
    <scope>FUNCTION</scope>
    <scope>ACTIVITY REGULATION</scope>
    <scope>INHIBITOR-BINDING</scope>
    <scope>3D-MODELING</scope>
</reference>
<reference key="9">
    <citation type="journal article" date="2005" name="Antimicrob. Agents Chemother.">
        <title>Differences in interactions between azole drugs related to modifications in the 14-alpha sterol demethylase gene (cyp51A) of Aspergillus fumigatus.</title>
        <authorList>
            <person name="Garcia-Effron G."/>
            <person name="Mellado E."/>
            <person name="Gomez-Lopez A."/>
            <person name="Alcazar-Fuoli L."/>
            <person name="Cuenca-Estrella M."/>
            <person name="Rodriguez-Tudela J.L."/>
        </authorList>
    </citation>
    <scope>FUNCTION</scope>
    <scope>ACTIVITY REGULATION</scope>
</reference>
<reference key="10">
    <citation type="journal article" date="2005" name="Antimicrob. Agents Chemother.">
        <title>Targeted gene disruption of the 14-alpha sterol demethylase (cyp51A) in Aspergillus fumigatus and its role in azole drug susceptibility.</title>
        <authorList>
            <person name="Mellado E."/>
            <person name="Garcia-Effron G."/>
            <person name="Buitrago M.J."/>
            <person name="Alcazar-Fuoli L."/>
            <person name="Cuenca-Estrella M."/>
            <person name="Rodriguez-Tudela J.L."/>
        </authorList>
    </citation>
    <scope>DISRUPTION PHENOTYPE</scope>
    <scope>FUNCTION</scope>
</reference>
<reference key="11">
    <citation type="journal article" date="2005" name="J. Antimicrob. Chemother.">
        <title>Mutations in the cyp51A gene and susceptibility to itraconazole in Aspergillus fumigatus serially isolated from a patient with lung aspergilloma.</title>
        <authorList>
            <person name="Chen J."/>
            <person name="Li H."/>
            <person name="Li R."/>
            <person name="Bu D."/>
            <person name="Wan Z."/>
        </authorList>
    </citation>
    <scope>FUNCTION</scope>
    <scope>MUTAGENESIS OF GLY-54 AND MET-220</scope>
</reference>
<reference key="12">
    <citation type="journal article" date="2005" name="J. Clin. Microbiol.">
        <title>Rapid, high-throughput, multiplex, real-time PCR for identification of mutations in the cyp51A gene of Aspergillus fumigatus that confer resistance to itraconazole.</title>
        <authorList>
            <person name="Balashov S.V."/>
            <person name="Gardiner R."/>
            <person name="Park S."/>
            <person name="Perlin D.S."/>
        </authorList>
    </citation>
    <scope>FUNCTION</scope>
    <scope>MUTAGENESIS OF GLY-54</scope>
</reference>
<reference key="13">
    <citation type="journal article" date="2005" name="J. Clin. Microbiol.">
        <title>Detection of Aspergillus fumigatus and a mutation that confers reduced susceptibility to itraconazole and posaconazole by real-time PCR and pyrosequencing.</title>
        <authorList>
            <person name="Trama J.P."/>
            <person name="Mordechai E."/>
            <person name="Adelson M.E."/>
        </authorList>
    </citation>
    <scope>FUNCTION</scope>
    <scope>MUTAGENESIS OF GLY-54</scope>
</reference>
<reference key="14">
    <citation type="journal article" date="2005" name="Med. Mycol.">
        <title>The ergosterol biosynthesis pathway, transporter genes, and azole resistance in Aspergillus fumigatus.</title>
        <authorList>
            <person name="Ferreira M.E."/>
            <person name="Colombo A.L."/>
            <person name="Paulsen I."/>
            <person name="Ren Q."/>
            <person name="Wortman J."/>
            <person name="Huang J."/>
            <person name="Goldman M.H."/>
            <person name="Goldman G.H."/>
        </authorList>
    </citation>
    <scope>IDENTIFICATION</scope>
    <scope>FUNCTION</scope>
</reference>
<reference key="15">
    <citation type="journal article" date="2006" name="Curr. Genet.">
        <title>Transcriptome analysis of Aspergillus fumigatus exposed to voriconazole.</title>
        <authorList>
            <person name="da Silva Ferreira M.E."/>
            <person name="Malavazi I."/>
            <person name="Savoldi M."/>
            <person name="Brakhage A.A."/>
            <person name="Goldman M.H."/>
            <person name="Kim H.S."/>
            <person name="Nierman W.C."/>
            <person name="Goldman G.H."/>
        </authorList>
    </citation>
    <scope>INDUCTION</scope>
</reference>
<reference key="16">
    <citation type="journal article" date="2007" name="Antimicrob. Agents Chemother.">
        <title>A new Aspergillus fumigatus resistance mechanism conferring in vitro cross-resistance to azole antifungals involves a combination of cyp51A alterations.</title>
        <authorList>
            <person name="Mellado E."/>
            <person name="Garcia-Effron G."/>
            <person name="Alcazar-Fuoli L."/>
            <person name="Melchers W.J."/>
            <person name="Verweij P.E."/>
            <person name="Cuenca-Estrella M."/>
            <person name="Rodriguez-Tudela J.L."/>
        </authorList>
    </citation>
    <scope>FUNCTION</scope>
    <scope>MUTAGENESIS OF LEU-98</scope>
</reference>
<reference key="17">
    <citation type="journal article" date="2008" name="Mol. Microbiol.">
        <title>SreA-mediated iron regulation in Aspergillus fumigatus.</title>
        <authorList>
            <person name="Schrettl M."/>
            <person name="Kim H.S."/>
            <person name="Eisendle M."/>
            <person name="Kragl C."/>
            <person name="Nierman W.C."/>
            <person name="Heinekamp T."/>
            <person name="Werner E.R."/>
            <person name="Jacobsen I."/>
            <person name="Illmer P."/>
            <person name="Yi H."/>
            <person name="Brakhage A.A."/>
            <person name="Haas H."/>
        </authorList>
    </citation>
    <scope>INDUCTION</scope>
</reference>
<reference key="18">
    <citation type="journal article" date="2008" name="Steroids">
        <title>Ergosterol biosynthesis pathway in Aspergillus fumigatus.</title>
        <authorList>
            <person name="Alcazar-Fuoli L."/>
            <person name="Mellado E."/>
            <person name="Garcia-Effron G."/>
            <person name="Lopez J.F."/>
            <person name="Grimalt J.O."/>
            <person name="Cuenca-Estrella J.M."/>
            <person name="Rodriguez-Tudela J.L."/>
        </authorList>
    </citation>
    <scope>FUNCTION</scope>
    <scope>CATALYTIC ACTIVITY</scope>
    <scope>PATHWAY</scope>
    <scope>DISRUPTION PHENOTYPE</scope>
</reference>
<reference key="19">
    <citation type="journal article" date="2011" name="Antimicrob. Agents Chemother.">
        <title>An improved model of the Aspergillus fumigatus CYP51A protein.</title>
        <authorList>
            <person name="Fraczek M.G."/>
            <person name="Bromley M."/>
            <person name="Bowyer P."/>
        </authorList>
    </citation>
    <scope>3D-MODELING</scope>
    <scope>FUNCTION</scope>
    <scope>INHIBITOR-BINDING</scope>
</reference>
<reference key="20">
    <citation type="journal article" date="2011" name="Fungal Genet. Biol.">
        <title>The structure-function relationship of the Aspergillus fumigatus cyp51A L98H conversion by site-directed mutagenesis: the mechanism of L98H azole resistance.</title>
        <authorList>
            <person name="Snelders E."/>
            <person name="Karawajczyk A."/>
            <person name="Verhoeven R.J."/>
            <person name="Venselaar H."/>
            <person name="Schaftenaar G."/>
            <person name="Verweij P.E."/>
            <person name="Melchers W.J."/>
        </authorList>
    </citation>
    <scope>FUNCTION</scope>
    <scope>MUTAGENESIS OF LEU-98</scope>
</reference>
<reference key="21">
    <citation type="journal article" date="2011" name="Int. J. Antimicrob. Agents">
        <title>Three-dimensional models of 14alpha-sterol demethylase (Cyp51A) from Aspergillus lentulus and Aspergillus fumigatus: an insight into differences in voriconazole interaction.</title>
        <authorList>
            <person name="Alcazar-Fuoli L."/>
            <person name="Cuesta I."/>
            <person name="Rodriguez-Tudela J.L."/>
            <person name="Cuenca-Estrella M."/>
            <person name="Sanglard D."/>
            <person name="Mellado E."/>
        </authorList>
    </citation>
    <scope>3D-MODELING</scope>
    <scope>FUNCTION</scope>
    <scope>INHIBITOR-BINDING</scope>
</reference>
<reference key="22">
    <citation type="journal article" date="2011" name="PLoS Genet.">
        <title>SREBP coordinates iron and ergosterol homeostasis to mediate triazole drug and hypoxia responses in the human fungal pathogen Aspergillus fumigatus.</title>
        <authorList>
            <person name="Blatzer M."/>
            <person name="Barker B.M."/>
            <person name="Willger S.D."/>
            <person name="Beckmann N."/>
            <person name="Blosser S.J."/>
            <person name="Cornish E.J."/>
            <person name="Mazurie A."/>
            <person name="Grahl N."/>
            <person name="Haas H."/>
            <person name="Cramer R.A."/>
        </authorList>
    </citation>
    <scope>INDUCTION</scope>
</reference>
<reference key="23">
    <citation type="journal article" date="2012" name="Antimicrob. Agents Chemother.">
        <title>SREBP-dependent triazole susceptibility in Aspergillus fumigatus is mediated through direct transcriptional regulation of erg11A (cyp51A).</title>
        <authorList>
            <person name="Blosser S.J."/>
            <person name="Cramer R.A."/>
        </authorList>
    </citation>
    <scope>INDUCTION</scope>
</reference>
<reference key="24">
    <citation type="journal article" date="2015" name="Antimicrob. Agents Chemother.">
        <title>In Vitro biochemical study of CYP51-mediated azole resistance in Aspergillus fumigatus.</title>
        <authorList>
            <person name="Warrilow A.G."/>
            <person name="Parker J.E."/>
            <person name="Price C.L."/>
            <person name="Nes W.D."/>
            <person name="Kelly S.L."/>
            <person name="Kelly D.E."/>
        </authorList>
    </citation>
    <scope>FUNCTION</scope>
    <scope>CATALYTIC ACTIVITY</scope>
    <scope>ACTIVITY REGULATION</scope>
</reference>
<reference key="25">
    <citation type="journal article" date="2018" name="Antimicrob. Agents Chemother.">
        <title>In vitro and in vivo efficacy of a novel and long-acting fungicidal azole, PC1244, on Aspergillus fumigatus infection.</title>
        <authorList>
            <person name="Colley T."/>
            <person name="Sehra G."/>
            <person name="Chowdhary A."/>
            <person name="Alanio A."/>
            <person name="Kelly S.L."/>
            <person name="Kizawa Y."/>
            <person name="Armstrong-James D."/>
            <person name="Fisher M.C."/>
            <person name="Warrilow A.G.S."/>
            <person name="Parker J.E."/>
            <person name="Kelly D.E."/>
            <person name="Kimura G."/>
            <person name="Nishimoto Y."/>
            <person name="Sunose M."/>
            <person name="Onions S."/>
            <person name="Crepin D."/>
            <person name="Lagasse F."/>
            <person name="Crittall M."/>
            <person name="Shannon J."/>
            <person name="McConville M."/>
            <person name="King-Underwood J."/>
            <person name="Naylor A."/>
            <person name="Bretagne S."/>
            <person name="Murray J."/>
            <person name="Ito K."/>
            <person name="Strong P."/>
            <person name="Rapeport G."/>
        </authorList>
    </citation>
    <scope>FUNCTION</scope>
    <scope>CATALYTIC ACTIVITY</scope>
    <scope>ACTIVITY REGULATION</scope>
</reference>
<keyword id="KW-0256">Endoplasmic reticulum</keyword>
<keyword id="KW-0325">Glycoprotein</keyword>
<keyword id="KW-0349">Heme</keyword>
<keyword id="KW-0408">Iron</keyword>
<keyword id="KW-0444">Lipid biosynthesis</keyword>
<keyword id="KW-0443">Lipid metabolism</keyword>
<keyword id="KW-0472">Membrane</keyword>
<keyword id="KW-0479">Metal-binding</keyword>
<keyword id="KW-0489">Methyltransferase</keyword>
<keyword id="KW-0503">Monooxygenase</keyword>
<keyword id="KW-0560">Oxidoreductase</keyword>
<keyword id="KW-1185">Reference proteome</keyword>
<keyword id="KW-0752">Steroid biosynthesis</keyword>
<keyword id="KW-0753">Steroid metabolism</keyword>
<keyword id="KW-0756">Sterol biosynthesis</keyword>
<keyword id="KW-1207">Sterol metabolism</keyword>
<keyword id="KW-0808">Transferase</keyword>
<keyword id="KW-0812">Transmembrane</keyword>
<keyword id="KW-1133">Transmembrane helix</keyword>
<comment type="function">
    <text evidence="1 9 17 22 23 24">Sterol 14alpha-demethylase, encoded by cyp51A and cyp51B, that plays a critical role in the third module of ergosterol biosynthesis pathway, being ergosterol the major sterol component in fungal membranes that participates in a variety of functions (PubMed:15215142, PubMed:18191972, PubMed:26459890, PubMed:29439966, PubMed:9184358). The third module or late pathway involves the ergosterol synthesis itself through consecutive reactions that mainly occur in the endoplasmic reticulum (ER) membrane (By similarity). In filamentous fungi, during the initial step of this module, lanosterol (lanosta-8,24-dien-3beta-ol) can be metabolized to eburicol (PubMed:18191972, PubMed:26459890, PubMed:29439966). Sterol 14alpha-demethylase catalyzes the three-step oxidative removal of the 14alpha-methyl group (C-32) of both these sterols in the form of formate, and converts eburicol and lanosterol to 14-demethyleburicol (4,4,24-trimethylergosta-8,14,24(28)-trienol) and 4,4-dimethyl-5alpha-cholesta-8,14,24-trien-3beta-ol, respectively, which are further metabolized by other enzymes in the pathway to ergosterol (PubMed:18191972, PubMed:26459890, PubMed:29439966). Can also use substrates not intrinsic to fungi, such as 24,25-dihydrolanosterol (DHL), producing 4,4'-dimethyl-8,14-cholestadien-3-beta-ol, but at lower rates than the endogenous substrates (By similarity).</text>
</comment>
<comment type="function">
    <text evidence="5 6 7 8 9 10 11 12 13 14 16 19 23 30 31">As a target of azole drugs, plays a crucial role in azole susceptibility.</text>
</comment>
<comment type="catalytic activity">
    <reaction evidence="17 22 23 24">
        <text>a 14alpha-methyl steroid + 3 reduced [NADPH--hemoprotein reductase] + 3 O2 = a Delta(14) steroid + formate + 3 oxidized [NADPH--hemoprotein reductase] + 4 H2O + 4 H(+)</text>
        <dbReference type="Rhea" id="RHEA:54028"/>
        <dbReference type="Rhea" id="RHEA-COMP:11964"/>
        <dbReference type="Rhea" id="RHEA-COMP:11965"/>
        <dbReference type="ChEBI" id="CHEBI:15377"/>
        <dbReference type="ChEBI" id="CHEBI:15378"/>
        <dbReference type="ChEBI" id="CHEBI:15379"/>
        <dbReference type="ChEBI" id="CHEBI:15740"/>
        <dbReference type="ChEBI" id="CHEBI:57618"/>
        <dbReference type="ChEBI" id="CHEBI:58210"/>
        <dbReference type="ChEBI" id="CHEBI:138029"/>
        <dbReference type="ChEBI" id="CHEBI:138031"/>
        <dbReference type="EC" id="1.14.14.154"/>
    </reaction>
    <physiologicalReaction direction="left-to-right" evidence="17 22 23 24">
        <dbReference type="Rhea" id="RHEA:54029"/>
    </physiologicalReaction>
</comment>
<comment type="catalytic activity">
    <reaction evidence="1">
        <text>a 14alpha-methyl steroid + reduced [NADPH--hemoprotein reductase] + O2 = a 14alpha-hydroxymethyl steroid + oxidized [NADPH--hemoprotein reductase] + H2O + H(+)</text>
        <dbReference type="Rhea" id="RHEA:68060"/>
        <dbReference type="Rhea" id="RHEA-COMP:11964"/>
        <dbReference type="Rhea" id="RHEA-COMP:11965"/>
        <dbReference type="ChEBI" id="CHEBI:15377"/>
        <dbReference type="ChEBI" id="CHEBI:15378"/>
        <dbReference type="ChEBI" id="CHEBI:15379"/>
        <dbReference type="ChEBI" id="CHEBI:57618"/>
        <dbReference type="ChEBI" id="CHEBI:58210"/>
        <dbReference type="ChEBI" id="CHEBI:138029"/>
        <dbReference type="ChEBI" id="CHEBI:176901"/>
    </reaction>
    <physiologicalReaction direction="left-to-right" evidence="1">
        <dbReference type="Rhea" id="RHEA:68061"/>
    </physiologicalReaction>
</comment>
<comment type="catalytic activity">
    <reaction evidence="1">
        <text>a 14alpha-hydroxymethyl steroid + reduced [NADPH--hemoprotein reductase] + O2 = a 14alpha-formyl steroid + oxidized [NADPH--hemoprotein reductase] + 2 H2O + H(+)</text>
        <dbReference type="Rhea" id="RHEA:68064"/>
        <dbReference type="Rhea" id="RHEA-COMP:11964"/>
        <dbReference type="Rhea" id="RHEA-COMP:11965"/>
        <dbReference type="ChEBI" id="CHEBI:15377"/>
        <dbReference type="ChEBI" id="CHEBI:15378"/>
        <dbReference type="ChEBI" id="CHEBI:15379"/>
        <dbReference type="ChEBI" id="CHEBI:57618"/>
        <dbReference type="ChEBI" id="CHEBI:58210"/>
        <dbReference type="ChEBI" id="CHEBI:176901"/>
        <dbReference type="ChEBI" id="CHEBI:176902"/>
    </reaction>
    <physiologicalReaction direction="left-to-right" evidence="1">
        <dbReference type="Rhea" id="RHEA:68065"/>
    </physiologicalReaction>
</comment>
<comment type="catalytic activity">
    <reaction evidence="1">
        <text>a 14alpha-formyl steroid + reduced [NADPH--hemoprotein reductase] + O2 = a Delta(14) steroid + formate + oxidized [NADPH--hemoprotein reductase] + H2O + 2 H(+)</text>
        <dbReference type="Rhea" id="RHEA:68068"/>
        <dbReference type="Rhea" id="RHEA-COMP:11964"/>
        <dbReference type="Rhea" id="RHEA-COMP:11965"/>
        <dbReference type="ChEBI" id="CHEBI:15377"/>
        <dbReference type="ChEBI" id="CHEBI:15378"/>
        <dbReference type="ChEBI" id="CHEBI:15379"/>
        <dbReference type="ChEBI" id="CHEBI:15740"/>
        <dbReference type="ChEBI" id="CHEBI:57618"/>
        <dbReference type="ChEBI" id="CHEBI:58210"/>
        <dbReference type="ChEBI" id="CHEBI:138031"/>
        <dbReference type="ChEBI" id="CHEBI:176902"/>
    </reaction>
    <physiologicalReaction direction="left-to-right" evidence="1">
        <dbReference type="Rhea" id="RHEA:68069"/>
    </physiologicalReaction>
</comment>
<comment type="catalytic activity">
    <reaction evidence="17 22 23">
        <text>lanosterol + 3 reduced [NADPH--hemoprotein reductase] + 3 O2 = 4,4-dimethyl-5alpha-cholesta-8,14,24-trien-3beta-ol + formate + 3 oxidized [NADPH--hemoprotein reductase] + 4 H2O + 4 H(+)</text>
        <dbReference type="Rhea" id="RHEA:25286"/>
        <dbReference type="Rhea" id="RHEA-COMP:11964"/>
        <dbReference type="Rhea" id="RHEA-COMP:11965"/>
        <dbReference type="ChEBI" id="CHEBI:15377"/>
        <dbReference type="ChEBI" id="CHEBI:15378"/>
        <dbReference type="ChEBI" id="CHEBI:15379"/>
        <dbReference type="ChEBI" id="CHEBI:15740"/>
        <dbReference type="ChEBI" id="CHEBI:16521"/>
        <dbReference type="ChEBI" id="CHEBI:17813"/>
        <dbReference type="ChEBI" id="CHEBI:57618"/>
        <dbReference type="ChEBI" id="CHEBI:58210"/>
        <dbReference type="EC" id="1.14.14.154"/>
    </reaction>
    <physiologicalReaction direction="left-to-right" evidence="17 22 23">
        <dbReference type="Rhea" id="RHEA:25287"/>
    </physiologicalReaction>
</comment>
<comment type="catalytic activity">
    <reaction evidence="1">
        <text>lanosterol + reduced [NADPH--hemoprotein reductase] + O2 = 32-hydroxylanosterol + oxidized [NADPH--hemoprotein reductase] + H2O + H(+)</text>
        <dbReference type="Rhea" id="RHEA:75103"/>
        <dbReference type="Rhea" id="RHEA-COMP:11964"/>
        <dbReference type="Rhea" id="RHEA-COMP:11965"/>
        <dbReference type="ChEBI" id="CHEBI:15377"/>
        <dbReference type="ChEBI" id="CHEBI:15378"/>
        <dbReference type="ChEBI" id="CHEBI:15379"/>
        <dbReference type="ChEBI" id="CHEBI:16521"/>
        <dbReference type="ChEBI" id="CHEBI:57618"/>
        <dbReference type="ChEBI" id="CHEBI:58210"/>
        <dbReference type="ChEBI" id="CHEBI:166806"/>
    </reaction>
    <physiologicalReaction direction="left-to-right" evidence="1">
        <dbReference type="Rhea" id="RHEA:75104"/>
    </physiologicalReaction>
</comment>
<comment type="catalytic activity">
    <reaction evidence="1">
        <text>32-hydroxylanosterol + reduced [NADPH--hemoprotein reductase] + O2 = 32-oxolanosterol + oxidized [NADPH--hemoprotein reductase] + 2 H2O + H(+)</text>
        <dbReference type="Rhea" id="RHEA:75107"/>
        <dbReference type="Rhea" id="RHEA-COMP:11964"/>
        <dbReference type="Rhea" id="RHEA-COMP:11965"/>
        <dbReference type="ChEBI" id="CHEBI:15377"/>
        <dbReference type="ChEBI" id="CHEBI:15378"/>
        <dbReference type="ChEBI" id="CHEBI:15379"/>
        <dbReference type="ChEBI" id="CHEBI:57618"/>
        <dbReference type="ChEBI" id="CHEBI:58210"/>
        <dbReference type="ChEBI" id="CHEBI:166681"/>
        <dbReference type="ChEBI" id="CHEBI:166806"/>
    </reaction>
    <physiologicalReaction direction="left-to-right" evidence="1">
        <dbReference type="Rhea" id="RHEA:75108"/>
    </physiologicalReaction>
</comment>
<comment type="catalytic activity">
    <reaction evidence="1">
        <text>32-oxolanosterol + reduced [NADPH--hemoprotein reductase] + O2 = 4,4-dimethyl-5alpha-cholesta-8,14,24-trien-3beta-ol + formate + oxidized [NADPH--hemoprotein reductase] + H2O + 2 H(+)</text>
        <dbReference type="Rhea" id="RHEA:75111"/>
        <dbReference type="Rhea" id="RHEA-COMP:11964"/>
        <dbReference type="Rhea" id="RHEA-COMP:11965"/>
        <dbReference type="ChEBI" id="CHEBI:15377"/>
        <dbReference type="ChEBI" id="CHEBI:15378"/>
        <dbReference type="ChEBI" id="CHEBI:15379"/>
        <dbReference type="ChEBI" id="CHEBI:15740"/>
        <dbReference type="ChEBI" id="CHEBI:17813"/>
        <dbReference type="ChEBI" id="CHEBI:57618"/>
        <dbReference type="ChEBI" id="CHEBI:58210"/>
        <dbReference type="ChEBI" id="CHEBI:166681"/>
    </reaction>
    <physiologicalReaction direction="left-to-right" evidence="1">
        <dbReference type="Rhea" id="RHEA:75112"/>
    </physiologicalReaction>
</comment>
<comment type="catalytic activity">
    <reaction evidence="17 22 23">
        <text>eburicol + 3 reduced [NADPH--hemoprotein reductase] + 3 O2 = 14-demethyleburicol + formate + 3 oxidized [NADPH--hemoprotein reductase] + 4 H2O + 4 H(+)</text>
        <dbReference type="Rhea" id="RHEA:75439"/>
        <dbReference type="Rhea" id="RHEA-COMP:11964"/>
        <dbReference type="Rhea" id="RHEA-COMP:11965"/>
        <dbReference type="ChEBI" id="CHEBI:15377"/>
        <dbReference type="ChEBI" id="CHEBI:15378"/>
        <dbReference type="ChEBI" id="CHEBI:15379"/>
        <dbReference type="ChEBI" id="CHEBI:15740"/>
        <dbReference type="ChEBI" id="CHEBI:57618"/>
        <dbReference type="ChEBI" id="CHEBI:58210"/>
        <dbReference type="ChEBI" id="CHEBI:70315"/>
        <dbReference type="ChEBI" id="CHEBI:194330"/>
    </reaction>
    <physiologicalReaction direction="left-to-right" evidence="17 22 23">
        <dbReference type="Rhea" id="RHEA:75440"/>
    </physiologicalReaction>
</comment>
<comment type="catalytic activity">
    <reaction evidence="1">
        <text>eburicol + reduced [NADPH--hemoprotein reductase] + O2 = 32-hydroxyeburicol + oxidized [NADPH--hemoprotein reductase] + H2O + H(+)</text>
        <dbReference type="Rhea" id="RHEA:75427"/>
        <dbReference type="Rhea" id="RHEA-COMP:11964"/>
        <dbReference type="Rhea" id="RHEA-COMP:11965"/>
        <dbReference type="ChEBI" id="CHEBI:15377"/>
        <dbReference type="ChEBI" id="CHEBI:15378"/>
        <dbReference type="ChEBI" id="CHEBI:15379"/>
        <dbReference type="ChEBI" id="CHEBI:57618"/>
        <dbReference type="ChEBI" id="CHEBI:58210"/>
        <dbReference type="ChEBI" id="CHEBI:70315"/>
        <dbReference type="ChEBI" id="CHEBI:194328"/>
    </reaction>
    <physiologicalReaction direction="left-to-right" evidence="1">
        <dbReference type="Rhea" id="RHEA:75428"/>
    </physiologicalReaction>
</comment>
<comment type="catalytic activity">
    <reaction evidence="1">
        <text>32-hydroxyeburicol + reduced [NADPH--hemoprotein reductase] + O2 = 32-oxoeburicol + oxidized [NADPH--hemoprotein reductase] + 2 H2O + H(+)</text>
        <dbReference type="Rhea" id="RHEA:75431"/>
        <dbReference type="Rhea" id="RHEA-COMP:11964"/>
        <dbReference type="Rhea" id="RHEA-COMP:11965"/>
        <dbReference type="ChEBI" id="CHEBI:15377"/>
        <dbReference type="ChEBI" id="CHEBI:15378"/>
        <dbReference type="ChEBI" id="CHEBI:15379"/>
        <dbReference type="ChEBI" id="CHEBI:57618"/>
        <dbReference type="ChEBI" id="CHEBI:58210"/>
        <dbReference type="ChEBI" id="CHEBI:194328"/>
        <dbReference type="ChEBI" id="CHEBI:194329"/>
    </reaction>
    <physiologicalReaction direction="left-to-right" evidence="1">
        <dbReference type="Rhea" id="RHEA:75432"/>
    </physiologicalReaction>
</comment>
<comment type="catalytic activity">
    <reaction evidence="1">
        <text>32-oxoeburicol + reduced [NADPH--hemoprotein reductase] + O2 = 14-demethyleburicol + formate + oxidized [NADPH--hemoprotein reductase] + H2O + 2 H(+)</text>
        <dbReference type="Rhea" id="RHEA:75435"/>
        <dbReference type="Rhea" id="RHEA-COMP:11964"/>
        <dbReference type="Rhea" id="RHEA-COMP:11965"/>
        <dbReference type="ChEBI" id="CHEBI:15377"/>
        <dbReference type="ChEBI" id="CHEBI:15378"/>
        <dbReference type="ChEBI" id="CHEBI:15379"/>
        <dbReference type="ChEBI" id="CHEBI:15740"/>
        <dbReference type="ChEBI" id="CHEBI:57618"/>
        <dbReference type="ChEBI" id="CHEBI:58210"/>
        <dbReference type="ChEBI" id="CHEBI:194329"/>
        <dbReference type="ChEBI" id="CHEBI:194330"/>
    </reaction>
    <physiologicalReaction direction="left-to-right" evidence="1">
        <dbReference type="Rhea" id="RHEA:75436"/>
    </physiologicalReaction>
</comment>
<comment type="cofactor">
    <cofactor>
        <name>heme</name>
        <dbReference type="ChEBI" id="CHEBI:30413"/>
    </cofactor>
</comment>
<comment type="activity regulation">
    <text evidence="8 13 22 23 24">The sterol 14-alpha demethylase activity is inhibited by azole compounds (PubMed:15142553, PubMed:15855543, PubMed:26459890, PubMed:9184358). Activity is inhibited by the novel and long-acting fungicidal azole, PC1244 (PubMed:29439966).</text>
</comment>
<comment type="pathway">
    <text evidence="17 24">Steroid metabolism; ergosterol biosynthesis.</text>
</comment>
<comment type="subcellular location">
    <subcellularLocation>
        <location evidence="28">Endoplasmic reticulum membrane</location>
        <topology evidence="3">Single-pass membrane protein</topology>
    </subcellularLocation>
</comment>
<comment type="induction">
    <text evidence="15 18 20 21">Expression is decreased upon exposure to voriconazole (PubMed:16622700). Expression is regulated by the GATA transcription factor sreA during hypoxia (PubMed:18721228, PubMed:22006005, PubMed:22144905).</text>
</comment>
<comment type="disruption phenotype">
    <text evidence="14 17">Leads to the accumulation of eburicol (PubMed:18191972). Leads to decreased susceptibility to azoles, especially fluconazole and ketoconazole, as well as to itraconazole in an itraconazole-resistant strain.</text>
</comment>
<comment type="miscellaneous">
    <text evidence="5 6 7 9 10 11 12 16 19">Mutations of Gly-54 or Met-220 lead to the resistance to azoles, clinical drugs used to inhibit the activity and kill Aspergillus fumigatus cells during infections (PubMed:12543662, PubMed:12604551, PubMed:12709346, PubMed:15215142, PubMed:15563516, PubMed:15634974, PubMed:15695702). Duplication in tandem of a 34 bp sequence in the cyp51A promoter located at positions -288 and -322 from the start codon also leads to azole resistance, when associated with a mutation of Leu-98 (PubMed:17371828, PubMed:21907818).</text>
</comment>
<comment type="miscellaneous">
    <text evidence="29">In Aspergillus, the biosynthesis pathway of the sterol precursors leading to the prevalent sterol ergosterol differs from yeast. The ring system of lanosterol in S.cerevisiae is firstly demethylised in three enzymatic steps leading to the intermediate zymosterol and secondly a methyl group is added to zymosterol by the sterol 24-C-methyltransferase to form fecosterol. In Aspergillus, lanosterol is firstly transmethylated by the sterol 24-C-methyltransferase leading to the intermediate eburicol and secondly demethylated in three steps to form fecosterol.</text>
</comment>
<comment type="similarity">
    <text evidence="28">Belongs to the cytochrome P450 family.</text>
</comment>
<sequence length="515" mass="58068">MVPMLWLTAYMAVAVLTAILLNVVYQLFFRLWNRTEPPMVFHWVPYLGSTISYGIDPYKFFFACREKYGDIFTFILLGQKTTVYLGVQGNEFILNGKLKDVNAEEVYSPLTTPVFGSDVVYDCPNSKLMEQKKFIKYGLTQSALESHVPLIEKEVLDYLRDSPNFQGSSGRVDISAAMAEITIFTAARALQGQEVRSKLTAEFADLYHDLDKGFTPINFMLPWAPLPHNKKRDAAHARMRSIYVDIITQRRLDGEKDSQKSDMIWNLMNCTYKNGQQVPDKEIAHMMITLLMAGQHSSSSISAWIMLRLASQPKVLEELYQEQLANLGPAGPDGSLPPLQYKDLDKLPFHQHVIRETLRIHSSIHSIMRKVKSPLPVPGTPYMIPPGRVLLASPGVTALSDEHFPNAGCWDPHRWENQATKEQENDKVVDYGYGAVSKGTSSPYLPFGAGRHRCIGEKFAYVNLGVILATIVRHLRLFNVDGKKGVPETDYSSLFSGPMKPSIIGWEKRSKNTSK</sequence>
<proteinExistence type="evidence at protein level"/>
<organism>
    <name type="scientific">Aspergillus fumigatus (strain ATCC MYA-4609 / CBS 101355 / FGSC A1100 / Af293)</name>
    <name type="common">Neosartorya fumigata</name>
    <dbReference type="NCBI Taxonomy" id="330879"/>
    <lineage>
        <taxon>Eukaryota</taxon>
        <taxon>Fungi</taxon>
        <taxon>Dikarya</taxon>
        <taxon>Ascomycota</taxon>
        <taxon>Pezizomycotina</taxon>
        <taxon>Eurotiomycetes</taxon>
        <taxon>Eurotiomycetidae</taxon>
        <taxon>Eurotiales</taxon>
        <taxon>Aspergillaceae</taxon>
        <taxon>Aspergillus</taxon>
        <taxon>Aspergillus subgen. Fumigati</taxon>
    </lineage>
</organism>
<evidence type="ECO:0000250" key="1">
    <source>
        <dbReference type="UniProtKB" id="P10614"/>
    </source>
</evidence>
<evidence type="ECO:0000250" key="2">
    <source>
        <dbReference type="UniProtKB" id="Q16850"/>
    </source>
</evidence>
<evidence type="ECO:0000255" key="3"/>
<evidence type="ECO:0000255" key="4">
    <source>
        <dbReference type="PROSITE-ProRule" id="PRU00498"/>
    </source>
</evidence>
<evidence type="ECO:0000269" key="5">
    <source>
    </source>
</evidence>
<evidence type="ECO:0000269" key="6">
    <source>
    </source>
</evidence>
<evidence type="ECO:0000269" key="7">
    <source>
    </source>
</evidence>
<evidence type="ECO:0000269" key="8">
    <source>
    </source>
</evidence>
<evidence type="ECO:0000269" key="9">
    <source>
    </source>
</evidence>
<evidence type="ECO:0000269" key="10">
    <source>
    </source>
</evidence>
<evidence type="ECO:0000269" key="11">
    <source>
    </source>
</evidence>
<evidence type="ECO:0000269" key="12">
    <source>
    </source>
</evidence>
<evidence type="ECO:0000269" key="13">
    <source>
    </source>
</evidence>
<evidence type="ECO:0000269" key="14">
    <source>
    </source>
</evidence>
<evidence type="ECO:0000269" key="15">
    <source>
    </source>
</evidence>
<evidence type="ECO:0000269" key="16">
    <source>
    </source>
</evidence>
<evidence type="ECO:0000269" key="17">
    <source>
    </source>
</evidence>
<evidence type="ECO:0000269" key="18">
    <source>
    </source>
</evidence>
<evidence type="ECO:0000269" key="19">
    <source>
    </source>
</evidence>
<evidence type="ECO:0000269" key="20">
    <source>
    </source>
</evidence>
<evidence type="ECO:0000269" key="21">
    <source>
    </source>
</evidence>
<evidence type="ECO:0000269" key="22">
    <source>
    </source>
</evidence>
<evidence type="ECO:0000269" key="23">
    <source>
    </source>
</evidence>
<evidence type="ECO:0000269" key="24">
    <source>
    </source>
</evidence>
<evidence type="ECO:0000303" key="25">
    <source>
    </source>
</evidence>
<evidence type="ECO:0000303" key="26">
    <source>
    </source>
</evidence>
<evidence type="ECO:0000303" key="27">
    <source>
    </source>
</evidence>
<evidence type="ECO:0000305" key="28"/>
<evidence type="ECO:0000305" key="29">
    <source>
    </source>
</evidence>
<evidence type="ECO:0000305" key="30">
    <source>
    </source>
</evidence>
<evidence type="ECO:0000305" key="31">
    <source>
    </source>
</evidence>
<protein>
    <recommendedName>
        <fullName evidence="25 27">Sterol 14-alpha demethylase cyp51A</fullName>
        <ecNumber evidence="17 22 23 24">1.14.14.154</ecNumber>
    </recommendedName>
    <alternativeName>
        <fullName evidence="25">Cytochrome P450 monooxygenase 51A</fullName>
    </alternativeName>
    <alternativeName>
        <fullName evidence="26">Ergosterol biosynthesis protein 11A</fullName>
    </alternativeName>
</protein>
<accession>Q4WNT5</accession>
<dbReference type="EC" id="1.14.14.154" evidence="17 22 23 24"/>
<dbReference type="EMBL" id="AAHF01000005">
    <property type="protein sequence ID" value="EAL90099.1"/>
    <property type="molecule type" value="Genomic_DNA"/>
</dbReference>
<dbReference type="RefSeq" id="XP_752137.1">
    <property type="nucleotide sequence ID" value="XM_747044.1"/>
</dbReference>
<dbReference type="SMR" id="Q4WNT5"/>
<dbReference type="FunCoup" id="Q4WNT5">
    <property type="interactions" value="553"/>
</dbReference>
<dbReference type="STRING" id="330879.Q4WNT5"/>
<dbReference type="BindingDB" id="Q4WNT5"/>
<dbReference type="ChEMBL" id="CHEMBL1681623"/>
<dbReference type="DrugCentral" id="Q4WNT5"/>
<dbReference type="GlyCosmos" id="Q4WNT5">
    <property type="glycosylation" value="3 sites, No reported glycans"/>
</dbReference>
<dbReference type="EnsemblFungi" id="EAL90099">
    <property type="protein sequence ID" value="EAL90099"/>
    <property type="gene ID" value="AFUA_4G06890"/>
</dbReference>
<dbReference type="GeneID" id="3509526"/>
<dbReference type="KEGG" id="afm:AFUA_4G06890"/>
<dbReference type="VEuPathDB" id="FungiDB:Afu4g06890"/>
<dbReference type="eggNOG" id="KOG0684">
    <property type="taxonomic scope" value="Eukaryota"/>
</dbReference>
<dbReference type="HOGENOM" id="CLU_001570_15_0_1"/>
<dbReference type="InParanoid" id="Q4WNT5"/>
<dbReference type="OMA" id="NFLMPWA"/>
<dbReference type="OrthoDB" id="1055148at2759"/>
<dbReference type="UniPathway" id="UPA00768"/>
<dbReference type="PHI-base" id="PHI:2534"/>
<dbReference type="Proteomes" id="UP000002530">
    <property type="component" value="Chromosome 4"/>
</dbReference>
<dbReference type="GO" id="GO:0005789">
    <property type="term" value="C:endoplasmic reticulum membrane"/>
    <property type="evidence" value="ECO:0007669"/>
    <property type="project" value="UniProtKB-SubCell"/>
</dbReference>
<dbReference type="GO" id="GO:0020037">
    <property type="term" value="F:heme binding"/>
    <property type="evidence" value="ECO:0007669"/>
    <property type="project" value="InterPro"/>
</dbReference>
<dbReference type="GO" id="GO:0005506">
    <property type="term" value="F:iron ion binding"/>
    <property type="evidence" value="ECO:0007669"/>
    <property type="project" value="InterPro"/>
</dbReference>
<dbReference type="GO" id="GO:0008168">
    <property type="term" value="F:methyltransferase activity"/>
    <property type="evidence" value="ECO:0007669"/>
    <property type="project" value="UniProtKB-KW"/>
</dbReference>
<dbReference type="GO" id="GO:0016491">
    <property type="term" value="F:oxidoreductase activity"/>
    <property type="evidence" value="ECO:0000318"/>
    <property type="project" value="GO_Central"/>
</dbReference>
<dbReference type="GO" id="GO:0008398">
    <property type="term" value="F:sterol 14-demethylase activity"/>
    <property type="evidence" value="ECO:0007669"/>
    <property type="project" value="UniProtKB-EC"/>
</dbReference>
<dbReference type="GO" id="GO:0006696">
    <property type="term" value="P:ergosterol biosynthetic process"/>
    <property type="evidence" value="ECO:0000318"/>
    <property type="project" value="GO_Central"/>
</dbReference>
<dbReference type="GO" id="GO:0032259">
    <property type="term" value="P:methylation"/>
    <property type="evidence" value="ECO:0007669"/>
    <property type="project" value="UniProtKB-KW"/>
</dbReference>
<dbReference type="CDD" id="cd11042">
    <property type="entry name" value="CYP51-like"/>
    <property type="match status" value="1"/>
</dbReference>
<dbReference type="FunFam" id="1.10.630.10:FF:000033">
    <property type="entry name" value="14-alpha sterol demethylase"/>
    <property type="match status" value="1"/>
</dbReference>
<dbReference type="Gene3D" id="1.10.630.10">
    <property type="entry name" value="Cytochrome P450"/>
    <property type="match status" value="1"/>
</dbReference>
<dbReference type="InterPro" id="IPR050529">
    <property type="entry name" value="CYP450_sterol_14alpha_dmase"/>
</dbReference>
<dbReference type="InterPro" id="IPR001128">
    <property type="entry name" value="Cyt_P450"/>
</dbReference>
<dbReference type="InterPro" id="IPR017972">
    <property type="entry name" value="Cyt_P450_CS"/>
</dbReference>
<dbReference type="InterPro" id="IPR002403">
    <property type="entry name" value="Cyt_P450_E_grp-IV"/>
</dbReference>
<dbReference type="InterPro" id="IPR036396">
    <property type="entry name" value="Cyt_P450_sf"/>
</dbReference>
<dbReference type="PANTHER" id="PTHR24304:SF2">
    <property type="entry name" value="24-HYDROXYCHOLESTEROL 7-ALPHA-HYDROXYLASE"/>
    <property type="match status" value="1"/>
</dbReference>
<dbReference type="PANTHER" id="PTHR24304">
    <property type="entry name" value="CYTOCHROME P450 FAMILY 7"/>
    <property type="match status" value="1"/>
</dbReference>
<dbReference type="Pfam" id="PF00067">
    <property type="entry name" value="p450"/>
    <property type="match status" value="1"/>
</dbReference>
<dbReference type="PRINTS" id="PR00465">
    <property type="entry name" value="EP450IV"/>
</dbReference>
<dbReference type="PRINTS" id="PR00385">
    <property type="entry name" value="P450"/>
</dbReference>
<dbReference type="SUPFAM" id="SSF48264">
    <property type="entry name" value="Cytochrome P450"/>
    <property type="match status" value="1"/>
</dbReference>
<dbReference type="PROSITE" id="PS00086">
    <property type="entry name" value="CYTOCHROME_P450"/>
    <property type="match status" value="1"/>
</dbReference>